<evidence type="ECO:0000255" key="1">
    <source>
        <dbReference type="HAMAP-Rule" id="MF_00239"/>
    </source>
</evidence>
<organism>
    <name type="scientific">Methanosphaerula palustris (strain ATCC BAA-1556 / DSM 19958 / E1-9c)</name>
    <dbReference type="NCBI Taxonomy" id="521011"/>
    <lineage>
        <taxon>Archaea</taxon>
        <taxon>Methanobacteriati</taxon>
        <taxon>Methanobacteriota</taxon>
        <taxon>Stenosarchaea group</taxon>
        <taxon>Methanomicrobia</taxon>
        <taxon>Methanomicrobiales</taxon>
        <taxon>Methanoregulaceae</taxon>
        <taxon>Methanosphaerula</taxon>
    </lineage>
</organism>
<feature type="chain" id="PRO_1000125312" description="Cytidylate kinase">
    <location>
        <begin position="1"/>
        <end position="176"/>
    </location>
</feature>
<feature type="binding site" evidence="1">
    <location>
        <begin position="7"/>
        <end position="15"/>
    </location>
    <ligand>
        <name>ATP</name>
        <dbReference type="ChEBI" id="CHEBI:30616"/>
    </ligand>
</feature>
<accession>B8GKF9</accession>
<gene>
    <name evidence="1" type="primary">cmk</name>
    <name type="ordered locus">Mpal_0468</name>
</gene>
<sequence length="176" mass="19628">MRITISGPPGSGTTSLSKHLAAEHNLKLISAGEVFRQLAREKGMDLAAFGELAENDPSIDLMIDARQKQIATEQDDIIVEGRLSGRMVEQADLRIWLNAPLTCRVGRIAFRDSVTCEEEAMTLTREREASEAKRYMMYYQIDISDLSSYHLVLNTERWSVGQLGLIVNCAIAAVRD</sequence>
<comment type="catalytic activity">
    <reaction evidence="1">
        <text>CMP + ATP = CDP + ADP</text>
        <dbReference type="Rhea" id="RHEA:11600"/>
        <dbReference type="ChEBI" id="CHEBI:30616"/>
        <dbReference type="ChEBI" id="CHEBI:58069"/>
        <dbReference type="ChEBI" id="CHEBI:60377"/>
        <dbReference type="ChEBI" id="CHEBI:456216"/>
        <dbReference type="EC" id="2.7.4.25"/>
    </reaction>
</comment>
<comment type="catalytic activity">
    <reaction evidence="1">
        <text>dCMP + ATP = dCDP + ADP</text>
        <dbReference type="Rhea" id="RHEA:25094"/>
        <dbReference type="ChEBI" id="CHEBI:30616"/>
        <dbReference type="ChEBI" id="CHEBI:57566"/>
        <dbReference type="ChEBI" id="CHEBI:58593"/>
        <dbReference type="ChEBI" id="CHEBI:456216"/>
        <dbReference type="EC" id="2.7.4.25"/>
    </reaction>
</comment>
<comment type="subcellular location">
    <subcellularLocation>
        <location evidence="1">Cytoplasm</location>
    </subcellularLocation>
</comment>
<comment type="similarity">
    <text evidence="1">Belongs to the cytidylate kinase family. Type 2 subfamily.</text>
</comment>
<name>KCY_METPE</name>
<protein>
    <recommendedName>
        <fullName evidence="1">Cytidylate kinase</fullName>
        <shortName evidence="1">CK</shortName>
        <ecNumber evidence="1">2.7.4.25</ecNumber>
    </recommendedName>
    <alternativeName>
        <fullName evidence="1">Cytidine monophosphate kinase</fullName>
        <shortName evidence="1">CMP kinase</shortName>
    </alternativeName>
</protein>
<reference key="1">
    <citation type="journal article" date="2015" name="Genome Announc.">
        <title>Complete Genome Sequence of Methanosphaerula palustris E1-9CT, a Hydrogenotrophic Methanogen Isolated from a Minerotrophic Fen Peatland.</title>
        <authorList>
            <person name="Cadillo-Quiroz H."/>
            <person name="Browne P."/>
            <person name="Kyrpides N."/>
            <person name="Woyke T."/>
            <person name="Goodwin L."/>
            <person name="Detter C."/>
            <person name="Yavitt J.B."/>
            <person name="Zinder S.H."/>
        </authorList>
    </citation>
    <scope>NUCLEOTIDE SEQUENCE [LARGE SCALE GENOMIC DNA]</scope>
    <source>
        <strain>ATCC BAA-1556 / DSM 19958 / E1-9c</strain>
    </source>
</reference>
<proteinExistence type="inferred from homology"/>
<keyword id="KW-0067">ATP-binding</keyword>
<keyword id="KW-0963">Cytoplasm</keyword>
<keyword id="KW-0418">Kinase</keyword>
<keyword id="KW-0547">Nucleotide-binding</keyword>
<keyword id="KW-1185">Reference proteome</keyword>
<keyword id="KW-0808">Transferase</keyword>
<dbReference type="EC" id="2.7.4.25" evidence="1"/>
<dbReference type="EMBL" id="CP001338">
    <property type="protein sequence ID" value="ACL15842.1"/>
    <property type="molecule type" value="Genomic_DNA"/>
</dbReference>
<dbReference type="RefSeq" id="WP_012617161.1">
    <property type="nucleotide sequence ID" value="NC_011832.1"/>
</dbReference>
<dbReference type="SMR" id="B8GKF9"/>
<dbReference type="STRING" id="521011.Mpal_0468"/>
<dbReference type="GeneID" id="7272792"/>
<dbReference type="KEGG" id="mpl:Mpal_0468"/>
<dbReference type="eggNOG" id="arCOG01037">
    <property type="taxonomic scope" value="Archaea"/>
</dbReference>
<dbReference type="HOGENOM" id="CLU_079959_1_0_2"/>
<dbReference type="OrthoDB" id="31096at2157"/>
<dbReference type="Proteomes" id="UP000002457">
    <property type="component" value="Chromosome"/>
</dbReference>
<dbReference type="GO" id="GO:0005737">
    <property type="term" value="C:cytoplasm"/>
    <property type="evidence" value="ECO:0007669"/>
    <property type="project" value="UniProtKB-SubCell"/>
</dbReference>
<dbReference type="GO" id="GO:0005524">
    <property type="term" value="F:ATP binding"/>
    <property type="evidence" value="ECO:0007669"/>
    <property type="project" value="UniProtKB-UniRule"/>
</dbReference>
<dbReference type="GO" id="GO:0036430">
    <property type="term" value="F:CMP kinase activity"/>
    <property type="evidence" value="ECO:0007669"/>
    <property type="project" value="RHEA"/>
</dbReference>
<dbReference type="GO" id="GO:0036431">
    <property type="term" value="F:dCMP kinase activity"/>
    <property type="evidence" value="ECO:0007669"/>
    <property type="project" value="RHEA"/>
</dbReference>
<dbReference type="GO" id="GO:0006220">
    <property type="term" value="P:pyrimidine nucleotide metabolic process"/>
    <property type="evidence" value="ECO:0007669"/>
    <property type="project" value="UniProtKB-UniRule"/>
</dbReference>
<dbReference type="CDD" id="cd02020">
    <property type="entry name" value="CMPK"/>
    <property type="match status" value="1"/>
</dbReference>
<dbReference type="Gene3D" id="3.40.50.300">
    <property type="entry name" value="P-loop containing nucleotide triphosphate hydrolases"/>
    <property type="match status" value="1"/>
</dbReference>
<dbReference type="HAMAP" id="MF_00239">
    <property type="entry name" value="Cytidyl_kinase_type2"/>
    <property type="match status" value="1"/>
</dbReference>
<dbReference type="InterPro" id="IPR011892">
    <property type="entry name" value="Cyt_kin_arch"/>
</dbReference>
<dbReference type="InterPro" id="IPR011994">
    <property type="entry name" value="Cytidylate_kinase_dom"/>
</dbReference>
<dbReference type="InterPro" id="IPR027417">
    <property type="entry name" value="P-loop_NTPase"/>
</dbReference>
<dbReference type="NCBIfam" id="TIGR02173">
    <property type="entry name" value="cyt_kin_arch"/>
    <property type="match status" value="1"/>
</dbReference>
<dbReference type="Pfam" id="PF13189">
    <property type="entry name" value="Cytidylate_kin2"/>
    <property type="match status" value="1"/>
</dbReference>
<dbReference type="SUPFAM" id="SSF52540">
    <property type="entry name" value="P-loop containing nucleoside triphosphate hydrolases"/>
    <property type="match status" value="1"/>
</dbReference>